<accession>P95654</accession>
<comment type="function">
    <text>Antenna complexes are light-harvesting systems, which transfer the excitation energy to the reaction centers.</text>
</comment>
<comment type="subunit">
    <text>The core complex is formed by different alpha and beta chains, binding bacteriochlorophyll molecules, and arranged most probably in tetrameric structures disposed around the reaction center. The non-pigmented gamma chains may constitute additional components.</text>
</comment>
<comment type="subcellular location">
    <subcellularLocation>
        <location>Cell inner membrane</location>
        <topology>Single-pass type II membrane protein</topology>
    </subcellularLocation>
</comment>
<comment type="similarity">
    <text evidence="3">Belongs to the antenna complex beta subunit family.</text>
</comment>
<keyword id="KW-0042">Antenna complex</keyword>
<keyword id="KW-0076">Bacteriochlorophyll</keyword>
<keyword id="KW-0997">Cell inner membrane</keyword>
<keyword id="KW-1003">Cell membrane</keyword>
<keyword id="KW-0148">Chlorophyll</keyword>
<keyword id="KW-0157">Chromophore</keyword>
<keyword id="KW-0903">Direct protein sequencing</keyword>
<keyword id="KW-0437">Light-harvesting polypeptide</keyword>
<keyword id="KW-0460">Magnesium</keyword>
<keyword id="KW-0472">Membrane</keyword>
<keyword id="KW-0479">Metal-binding</keyword>
<keyword id="KW-0812">Transmembrane</keyword>
<keyword id="KW-1133">Transmembrane helix</keyword>
<sequence length="51" mass="5569">MTDDMDKVWPTGLTLAEAEEVHKQLIDGTRVFGAIALFAHFLAAIATPWLG</sequence>
<feature type="initiator methionine" description="Removed" evidence="2">
    <location>
        <position position="1"/>
    </location>
</feature>
<feature type="chain" id="PRO_0000099837" description="Light-harvesting protein B-800/850 beta chain">
    <location>
        <begin position="2"/>
        <end position="51"/>
    </location>
</feature>
<feature type="topological domain" description="Cytoplasmic" evidence="1">
    <location>
        <begin position="2"/>
        <end position="23"/>
    </location>
</feature>
<feature type="transmembrane region" description="Helical" evidence="1">
    <location>
        <begin position="24"/>
        <end position="46"/>
    </location>
</feature>
<feature type="topological domain" description="Periplasmic" evidence="1">
    <location>
        <begin position="47"/>
        <end position="51"/>
    </location>
</feature>
<feature type="binding site" description="axial binding residue" evidence="1">
    <location>
        <position position="22"/>
    </location>
    <ligand>
        <name>a bacteriochlorophyll</name>
        <dbReference type="ChEBI" id="CHEBI:38201"/>
    </ligand>
    <ligandPart>
        <name>Mg</name>
        <dbReference type="ChEBI" id="CHEBI:25107"/>
    </ligandPart>
</feature>
<feature type="binding site" description="axial binding residue" evidence="1">
    <location>
        <position position="40"/>
    </location>
    <ligand>
        <name>a bacteriochlorophyll</name>
        <dbReference type="ChEBI" id="CHEBI:38201"/>
    </ligand>
    <ligandPart>
        <name>Mg</name>
        <dbReference type="ChEBI" id="CHEBI:25107"/>
    </ligandPart>
</feature>
<gene>
    <name type="primary">pucB</name>
</gene>
<proteinExistence type="evidence at protein level"/>
<protein>
    <recommendedName>
        <fullName>Light-harvesting protein B-800/850 beta chain</fullName>
    </recommendedName>
    <alternativeName>
        <fullName>Antenna pigment protein beta chain</fullName>
    </alternativeName>
    <alternativeName>
        <fullName>LH-3B</fullName>
    </alternativeName>
</protein>
<name>LHB2_RHOSU</name>
<reference key="1">
    <citation type="journal article" date="1997" name="Biochim. Biophys. Acta">
        <title>Gene cloning and regulation of gene expression of the puc operon from Rhodovulum sulfidophilum.</title>
        <authorList>
            <person name="Hagemann G.E."/>
            <person name="Katsiou E."/>
            <person name="Forkl H."/>
            <person name="Steindorf A.C."/>
            <person name="Tadros M.H."/>
        </authorList>
    </citation>
    <scope>NUCLEOTIDE SEQUENCE [GENOMIC DNA]</scope>
    <source>
        <strain>W4</strain>
    </source>
</reference>
<reference key="2">
    <citation type="journal article" date="1995" name="FEBS Lett.">
        <title>Isolation and complete amino acid sequence of the beta- and alpha-polypeptides from the peripheral light-harvesting pigment-protein complex II of Rhodobacter sulfidophilus.</title>
        <authorList>
            <person name="Tadros M.H."/>
            <person name="Hagemann G.E."/>
            <person name="Katsiou E."/>
            <person name="Dierstein R."/>
            <person name="Schiltz E."/>
        </authorList>
    </citation>
    <scope>PROTEIN SEQUENCE OF 2-51</scope>
    <source>
        <strain>W4</strain>
    </source>
</reference>
<organism>
    <name type="scientific">Rhodovulum sulfidophilum</name>
    <name type="common">Rhodobacter sulfidophilus</name>
    <dbReference type="NCBI Taxonomy" id="35806"/>
    <lineage>
        <taxon>Bacteria</taxon>
        <taxon>Pseudomonadati</taxon>
        <taxon>Pseudomonadota</taxon>
        <taxon>Alphaproteobacteria</taxon>
        <taxon>Rhodobacterales</taxon>
        <taxon>Paracoccaceae</taxon>
        <taxon>Rhodovulum</taxon>
    </lineage>
</organism>
<evidence type="ECO:0000255" key="1"/>
<evidence type="ECO:0000269" key="2">
    <source>
    </source>
</evidence>
<evidence type="ECO:0000305" key="3"/>
<dbReference type="EMBL" id="U81968">
    <property type="protein sequence ID" value="AAB59006.1"/>
    <property type="molecule type" value="Genomic_DNA"/>
</dbReference>
<dbReference type="PIR" id="S66224">
    <property type="entry name" value="S66224"/>
</dbReference>
<dbReference type="SMR" id="P95654"/>
<dbReference type="STRING" id="35806.A6024_09290"/>
<dbReference type="eggNOG" id="ENOG50331U4">
    <property type="taxonomic scope" value="Bacteria"/>
</dbReference>
<dbReference type="OrthoDB" id="7391998at2"/>
<dbReference type="GO" id="GO:0005886">
    <property type="term" value="C:plasma membrane"/>
    <property type="evidence" value="ECO:0007669"/>
    <property type="project" value="UniProtKB-SubCell"/>
</dbReference>
<dbReference type="GO" id="GO:0030077">
    <property type="term" value="C:plasma membrane light-harvesting complex"/>
    <property type="evidence" value="ECO:0007669"/>
    <property type="project" value="InterPro"/>
</dbReference>
<dbReference type="GO" id="GO:0042314">
    <property type="term" value="F:bacteriochlorophyll binding"/>
    <property type="evidence" value="ECO:0007669"/>
    <property type="project" value="UniProtKB-KW"/>
</dbReference>
<dbReference type="GO" id="GO:0045156">
    <property type="term" value="F:electron transporter, transferring electrons within the cyclic electron transport pathway of photosynthesis activity"/>
    <property type="evidence" value="ECO:0007669"/>
    <property type="project" value="InterPro"/>
</dbReference>
<dbReference type="GO" id="GO:0046872">
    <property type="term" value="F:metal ion binding"/>
    <property type="evidence" value="ECO:0007669"/>
    <property type="project" value="UniProtKB-KW"/>
</dbReference>
<dbReference type="GO" id="GO:0019684">
    <property type="term" value="P:photosynthesis, light reaction"/>
    <property type="evidence" value="ECO:0007669"/>
    <property type="project" value="InterPro"/>
</dbReference>
<dbReference type="Gene3D" id="1.20.5.250">
    <property type="match status" value="1"/>
</dbReference>
<dbReference type="InterPro" id="IPR000066">
    <property type="entry name" value="Antenna_a/b"/>
</dbReference>
<dbReference type="InterPro" id="IPR023623">
    <property type="entry name" value="Antenna_beta_CS"/>
</dbReference>
<dbReference type="InterPro" id="IPR023624">
    <property type="entry name" value="Antenna_beta_dom_sf"/>
</dbReference>
<dbReference type="InterPro" id="IPR002362">
    <property type="entry name" value="LHB-1/5"/>
</dbReference>
<dbReference type="InterPro" id="IPR035889">
    <property type="entry name" value="Light-harvesting_complex"/>
</dbReference>
<dbReference type="NCBIfam" id="NF040862">
    <property type="entry name" value="pufB_517_ASD"/>
    <property type="match status" value="1"/>
</dbReference>
<dbReference type="Pfam" id="PF00556">
    <property type="entry name" value="LHC"/>
    <property type="match status" value="1"/>
</dbReference>
<dbReference type="PIRSF" id="PIRSF002900">
    <property type="entry name" value="Antenna_beta"/>
    <property type="match status" value="1"/>
</dbReference>
<dbReference type="PRINTS" id="PR00674">
    <property type="entry name" value="LIGHTHARVSTB"/>
</dbReference>
<dbReference type="SUPFAM" id="SSF56918">
    <property type="entry name" value="Light-harvesting complex subunits"/>
    <property type="match status" value="1"/>
</dbReference>
<dbReference type="PROSITE" id="PS00969">
    <property type="entry name" value="ANTENNA_COMP_BETA"/>
    <property type="match status" value="1"/>
</dbReference>